<evidence type="ECO:0000255" key="1"/>
<evidence type="ECO:0000255" key="2">
    <source>
        <dbReference type="PROSITE-ProRule" id="PRU00316"/>
    </source>
</evidence>
<evidence type="ECO:0000305" key="3"/>
<name>FNDC9_MOUSE</name>
<accession>Q8BJN4</accession>
<gene>
    <name type="primary">Fndc9</name>
</gene>
<protein>
    <recommendedName>
        <fullName>Fibronectin type III domain-containing protein 9</fullName>
    </recommendedName>
</protein>
<sequence>MNIEVGNVSHTGAIISWSPSEPCLEDYYHIMYRPNWNSIFSGYLRYNFHHEEKVPRTITSVALEHLAPSTLYFLCISCKKAAFPYSHYCTMFHTLDKSPLAAGGSLVDPQISLWVLMAILLACFTAVLAFICLQFWCLRCHEPRWSYRAGQMEEANGLVRWPEETPALGQREEDLQGFPLEELPRKNSGARAKAEPEAEAIQDALEVVALAREIGNQPAILPHYRE</sequence>
<feature type="chain" id="PRO_0000299410" description="Fibronectin type III domain-containing protein 9">
    <location>
        <begin position="1"/>
        <end position="226"/>
    </location>
</feature>
<feature type="transmembrane region" description="Helical" evidence="1">
    <location>
        <begin position="113"/>
        <end position="133"/>
    </location>
</feature>
<feature type="domain" description="Fibronectin type-III" evidence="2">
    <location>
        <begin position="1"/>
        <end position="101"/>
    </location>
</feature>
<keyword id="KW-0472">Membrane</keyword>
<keyword id="KW-1185">Reference proteome</keyword>
<keyword id="KW-0812">Transmembrane</keyword>
<keyword id="KW-1133">Transmembrane helix</keyword>
<proteinExistence type="evidence at transcript level"/>
<dbReference type="EMBL" id="AK081240">
    <property type="protein sequence ID" value="BAC38174.1"/>
    <property type="molecule type" value="mRNA"/>
</dbReference>
<dbReference type="EMBL" id="AL713958">
    <property type="status" value="NOT_ANNOTATED_CDS"/>
    <property type="molecule type" value="Genomic_DNA"/>
</dbReference>
<dbReference type="EMBL" id="BC104394">
    <property type="protein sequence ID" value="AAI04395.1"/>
    <property type="molecule type" value="mRNA"/>
</dbReference>
<dbReference type="EMBL" id="BC104395">
    <property type="protein sequence ID" value="AAI04396.1"/>
    <property type="molecule type" value="mRNA"/>
</dbReference>
<dbReference type="CCDS" id="CCDS24574.1"/>
<dbReference type="RefSeq" id="NP_796049.1">
    <property type="nucleotide sequence ID" value="NM_177075.5"/>
</dbReference>
<dbReference type="SMR" id="Q8BJN4"/>
<dbReference type="FunCoup" id="Q8BJN4">
    <property type="interactions" value="64"/>
</dbReference>
<dbReference type="STRING" id="10090.ENSMUSP00000060509"/>
<dbReference type="PhosphoSitePlus" id="Q8BJN4"/>
<dbReference type="PaxDb" id="10090-ENSMUSP00000060509"/>
<dbReference type="ProteomicsDB" id="271788"/>
<dbReference type="DNASU" id="320116"/>
<dbReference type="Ensembl" id="ENSMUST00000060185.3">
    <property type="protein sequence ID" value="ENSMUSP00000060509.3"/>
    <property type="gene ID" value="ENSMUSG00000048721.3"/>
</dbReference>
<dbReference type="GeneID" id="320116"/>
<dbReference type="KEGG" id="mmu:320116"/>
<dbReference type="UCSC" id="uc007ioe.1">
    <property type="organism name" value="mouse"/>
</dbReference>
<dbReference type="AGR" id="MGI:2443410"/>
<dbReference type="CTD" id="408263"/>
<dbReference type="MGI" id="MGI:2443410">
    <property type="gene designation" value="Fndc9"/>
</dbReference>
<dbReference type="VEuPathDB" id="HostDB:ENSMUSG00000048721"/>
<dbReference type="eggNOG" id="ENOG502RYGM">
    <property type="taxonomic scope" value="Eukaryota"/>
</dbReference>
<dbReference type="GeneTree" id="ENSGT00390000013517"/>
<dbReference type="HOGENOM" id="CLU_107630_0_0_1"/>
<dbReference type="InParanoid" id="Q8BJN4"/>
<dbReference type="OMA" id="TVSWAMS"/>
<dbReference type="OrthoDB" id="9406011at2759"/>
<dbReference type="PhylomeDB" id="Q8BJN4"/>
<dbReference type="TreeFam" id="TF335961"/>
<dbReference type="BioGRID-ORCS" id="320116">
    <property type="hits" value="4 hits in 75 CRISPR screens"/>
</dbReference>
<dbReference type="PRO" id="PR:Q8BJN4"/>
<dbReference type="Proteomes" id="UP000000589">
    <property type="component" value="Chromosome 11"/>
</dbReference>
<dbReference type="RNAct" id="Q8BJN4">
    <property type="molecule type" value="protein"/>
</dbReference>
<dbReference type="Bgee" id="ENSMUSG00000048721">
    <property type="expression patterns" value="Expressed in esophagus and 71 other cell types or tissues"/>
</dbReference>
<dbReference type="GO" id="GO:0016020">
    <property type="term" value="C:membrane"/>
    <property type="evidence" value="ECO:0007669"/>
    <property type="project" value="UniProtKB-SubCell"/>
</dbReference>
<dbReference type="CDD" id="cd00063">
    <property type="entry name" value="FN3"/>
    <property type="match status" value="1"/>
</dbReference>
<dbReference type="Gene3D" id="2.60.40.10">
    <property type="entry name" value="Immunoglobulins"/>
    <property type="match status" value="1"/>
</dbReference>
<dbReference type="InterPro" id="IPR003961">
    <property type="entry name" value="FN3_dom"/>
</dbReference>
<dbReference type="InterPro" id="IPR036116">
    <property type="entry name" value="FN3_sf"/>
</dbReference>
<dbReference type="InterPro" id="IPR013783">
    <property type="entry name" value="Ig-like_fold"/>
</dbReference>
<dbReference type="PANTHER" id="PTHR37361">
    <property type="entry name" value="FIBRONECTIN TYPE III DOMAIN-CONTAINING PROTEIN 9"/>
    <property type="match status" value="1"/>
</dbReference>
<dbReference type="PANTHER" id="PTHR37361:SF2">
    <property type="entry name" value="FIBRONECTIN TYPE III DOMAIN-CONTAINING PROTEIN 9"/>
    <property type="match status" value="1"/>
</dbReference>
<dbReference type="SUPFAM" id="SSF49265">
    <property type="entry name" value="Fibronectin type III"/>
    <property type="match status" value="1"/>
</dbReference>
<dbReference type="PROSITE" id="PS50853">
    <property type="entry name" value="FN3"/>
    <property type="match status" value="1"/>
</dbReference>
<comment type="subcellular location">
    <subcellularLocation>
        <location evidence="3">Membrane</location>
        <topology evidence="3">Single-pass membrane protein</topology>
    </subcellularLocation>
</comment>
<comment type="caution">
    <text evidence="3">Encoded in intron of the gene CYFIP2 (opposite strand).</text>
</comment>
<organism>
    <name type="scientific">Mus musculus</name>
    <name type="common">Mouse</name>
    <dbReference type="NCBI Taxonomy" id="10090"/>
    <lineage>
        <taxon>Eukaryota</taxon>
        <taxon>Metazoa</taxon>
        <taxon>Chordata</taxon>
        <taxon>Craniata</taxon>
        <taxon>Vertebrata</taxon>
        <taxon>Euteleostomi</taxon>
        <taxon>Mammalia</taxon>
        <taxon>Eutheria</taxon>
        <taxon>Euarchontoglires</taxon>
        <taxon>Glires</taxon>
        <taxon>Rodentia</taxon>
        <taxon>Myomorpha</taxon>
        <taxon>Muroidea</taxon>
        <taxon>Muridae</taxon>
        <taxon>Murinae</taxon>
        <taxon>Mus</taxon>
        <taxon>Mus</taxon>
    </lineage>
</organism>
<reference key="1">
    <citation type="journal article" date="2005" name="Science">
        <title>The transcriptional landscape of the mammalian genome.</title>
        <authorList>
            <person name="Carninci P."/>
            <person name="Kasukawa T."/>
            <person name="Katayama S."/>
            <person name="Gough J."/>
            <person name="Frith M.C."/>
            <person name="Maeda N."/>
            <person name="Oyama R."/>
            <person name="Ravasi T."/>
            <person name="Lenhard B."/>
            <person name="Wells C."/>
            <person name="Kodzius R."/>
            <person name="Shimokawa K."/>
            <person name="Bajic V.B."/>
            <person name="Brenner S.E."/>
            <person name="Batalov S."/>
            <person name="Forrest A.R."/>
            <person name="Zavolan M."/>
            <person name="Davis M.J."/>
            <person name="Wilming L.G."/>
            <person name="Aidinis V."/>
            <person name="Allen J.E."/>
            <person name="Ambesi-Impiombato A."/>
            <person name="Apweiler R."/>
            <person name="Aturaliya R.N."/>
            <person name="Bailey T.L."/>
            <person name="Bansal M."/>
            <person name="Baxter L."/>
            <person name="Beisel K.W."/>
            <person name="Bersano T."/>
            <person name="Bono H."/>
            <person name="Chalk A.M."/>
            <person name="Chiu K.P."/>
            <person name="Choudhary V."/>
            <person name="Christoffels A."/>
            <person name="Clutterbuck D.R."/>
            <person name="Crowe M.L."/>
            <person name="Dalla E."/>
            <person name="Dalrymple B.P."/>
            <person name="de Bono B."/>
            <person name="Della Gatta G."/>
            <person name="di Bernardo D."/>
            <person name="Down T."/>
            <person name="Engstrom P."/>
            <person name="Fagiolini M."/>
            <person name="Faulkner G."/>
            <person name="Fletcher C.F."/>
            <person name="Fukushima T."/>
            <person name="Furuno M."/>
            <person name="Futaki S."/>
            <person name="Gariboldi M."/>
            <person name="Georgii-Hemming P."/>
            <person name="Gingeras T.R."/>
            <person name="Gojobori T."/>
            <person name="Green R.E."/>
            <person name="Gustincich S."/>
            <person name="Harbers M."/>
            <person name="Hayashi Y."/>
            <person name="Hensch T.K."/>
            <person name="Hirokawa N."/>
            <person name="Hill D."/>
            <person name="Huminiecki L."/>
            <person name="Iacono M."/>
            <person name="Ikeo K."/>
            <person name="Iwama A."/>
            <person name="Ishikawa T."/>
            <person name="Jakt M."/>
            <person name="Kanapin A."/>
            <person name="Katoh M."/>
            <person name="Kawasawa Y."/>
            <person name="Kelso J."/>
            <person name="Kitamura H."/>
            <person name="Kitano H."/>
            <person name="Kollias G."/>
            <person name="Krishnan S.P."/>
            <person name="Kruger A."/>
            <person name="Kummerfeld S.K."/>
            <person name="Kurochkin I.V."/>
            <person name="Lareau L.F."/>
            <person name="Lazarevic D."/>
            <person name="Lipovich L."/>
            <person name="Liu J."/>
            <person name="Liuni S."/>
            <person name="McWilliam S."/>
            <person name="Madan Babu M."/>
            <person name="Madera M."/>
            <person name="Marchionni L."/>
            <person name="Matsuda H."/>
            <person name="Matsuzawa S."/>
            <person name="Miki H."/>
            <person name="Mignone F."/>
            <person name="Miyake S."/>
            <person name="Morris K."/>
            <person name="Mottagui-Tabar S."/>
            <person name="Mulder N."/>
            <person name="Nakano N."/>
            <person name="Nakauchi H."/>
            <person name="Ng P."/>
            <person name="Nilsson R."/>
            <person name="Nishiguchi S."/>
            <person name="Nishikawa S."/>
            <person name="Nori F."/>
            <person name="Ohara O."/>
            <person name="Okazaki Y."/>
            <person name="Orlando V."/>
            <person name="Pang K.C."/>
            <person name="Pavan W.J."/>
            <person name="Pavesi G."/>
            <person name="Pesole G."/>
            <person name="Petrovsky N."/>
            <person name="Piazza S."/>
            <person name="Reed J."/>
            <person name="Reid J.F."/>
            <person name="Ring B.Z."/>
            <person name="Ringwald M."/>
            <person name="Rost B."/>
            <person name="Ruan Y."/>
            <person name="Salzberg S.L."/>
            <person name="Sandelin A."/>
            <person name="Schneider C."/>
            <person name="Schoenbach C."/>
            <person name="Sekiguchi K."/>
            <person name="Semple C.A."/>
            <person name="Seno S."/>
            <person name="Sessa L."/>
            <person name="Sheng Y."/>
            <person name="Shibata Y."/>
            <person name="Shimada H."/>
            <person name="Shimada K."/>
            <person name="Silva D."/>
            <person name="Sinclair B."/>
            <person name="Sperling S."/>
            <person name="Stupka E."/>
            <person name="Sugiura K."/>
            <person name="Sultana R."/>
            <person name="Takenaka Y."/>
            <person name="Taki K."/>
            <person name="Tammoja K."/>
            <person name="Tan S.L."/>
            <person name="Tang S."/>
            <person name="Taylor M.S."/>
            <person name="Tegner J."/>
            <person name="Teichmann S.A."/>
            <person name="Ueda H.R."/>
            <person name="van Nimwegen E."/>
            <person name="Verardo R."/>
            <person name="Wei C.L."/>
            <person name="Yagi K."/>
            <person name="Yamanishi H."/>
            <person name="Zabarovsky E."/>
            <person name="Zhu S."/>
            <person name="Zimmer A."/>
            <person name="Hide W."/>
            <person name="Bult C."/>
            <person name="Grimmond S.M."/>
            <person name="Teasdale R.D."/>
            <person name="Liu E.T."/>
            <person name="Brusic V."/>
            <person name="Quackenbush J."/>
            <person name="Wahlestedt C."/>
            <person name="Mattick J.S."/>
            <person name="Hume D.A."/>
            <person name="Kai C."/>
            <person name="Sasaki D."/>
            <person name="Tomaru Y."/>
            <person name="Fukuda S."/>
            <person name="Kanamori-Katayama M."/>
            <person name="Suzuki M."/>
            <person name="Aoki J."/>
            <person name="Arakawa T."/>
            <person name="Iida J."/>
            <person name="Imamura K."/>
            <person name="Itoh M."/>
            <person name="Kato T."/>
            <person name="Kawaji H."/>
            <person name="Kawagashira N."/>
            <person name="Kawashima T."/>
            <person name="Kojima M."/>
            <person name="Kondo S."/>
            <person name="Konno H."/>
            <person name="Nakano K."/>
            <person name="Ninomiya N."/>
            <person name="Nishio T."/>
            <person name="Okada M."/>
            <person name="Plessy C."/>
            <person name="Shibata K."/>
            <person name="Shiraki T."/>
            <person name="Suzuki S."/>
            <person name="Tagami M."/>
            <person name="Waki K."/>
            <person name="Watahiki A."/>
            <person name="Okamura-Oho Y."/>
            <person name="Suzuki H."/>
            <person name="Kawai J."/>
            <person name="Hayashizaki Y."/>
        </authorList>
    </citation>
    <scope>NUCLEOTIDE SEQUENCE [LARGE SCALE MRNA]</scope>
    <source>
        <strain>C57BL/6J</strain>
    </source>
</reference>
<reference key="2">
    <citation type="journal article" date="2009" name="PLoS Biol.">
        <title>Lineage-specific biology revealed by a finished genome assembly of the mouse.</title>
        <authorList>
            <person name="Church D.M."/>
            <person name="Goodstadt L."/>
            <person name="Hillier L.W."/>
            <person name="Zody M.C."/>
            <person name="Goldstein S."/>
            <person name="She X."/>
            <person name="Bult C.J."/>
            <person name="Agarwala R."/>
            <person name="Cherry J.L."/>
            <person name="DiCuccio M."/>
            <person name="Hlavina W."/>
            <person name="Kapustin Y."/>
            <person name="Meric P."/>
            <person name="Maglott D."/>
            <person name="Birtle Z."/>
            <person name="Marques A.C."/>
            <person name="Graves T."/>
            <person name="Zhou S."/>
            <person name="Teague B."/>
            <person name="Potamousis K."/>
            <person name="Churas C."/>
            <person name="Place M."/>
            <person name="Herschleb J."/>
            <person name="Runnheim R."/>
            <person name="Forrest D."/>
            <person name="Amos-Landgraf J."/>
            <person name="Schwartz D.C."/>
            <person name="Cheng Z."/>
            <person name="Lindblad-Toh K."/>
            <person name="Eichler E.E."/>
            <person name="Ponting C.P."/>
        </authorList>
    </citation>
    <scope>NUCLEOTIDE SEQUENCE [LARGE SCALE GENOMIC DNA]</scope>
    <source>
        <strain>C57BL/6J</strain>
    </source>
</reference>
<reference key="3">
    <citation type="journal article" date="2004" name="Genome Res.">
        <title>The status, quality, and expansion of the NIH full-length cDNA project: the Mammalian Gene Collection (MGC).</title>
        <authorList>
            <consortium name="The MGC Project Team"/>
        </authorList>
    </citation>
    <scope>NUCLEOTIDE SEQUENCE [LARGE SCALE MRNA]</scope>
</reference>